<accession>Q44740</accession>
<accession>O07956</accession>
<dbReference type="EC" id="1.-.-.-"/>
<dbReference type="EMBL" id="U32117">
    <property type="protein sequence ID" value="AAA97596.1"/>
    <property type="molecule type" value="Genomic_DNA"/>
</dbReference>
<dbReference type="EMBL" id="U61153">
    <property type="protein sequence ID" value="AAB40618.1"/>
    <property type="molecule type" value="Genomic_DNA"/>
</dbReference>
<dbReference type="EMBL" id="BX640448">
    <property type="protein sequence ID" value="CAE35867.1"/>
    <property type="molecule type" value="Genomic_DNA"/>
</dbReference>
<dbReference type="PIR" id="JC4556">
    <property type="entry name" value="JC4556"/>
</dbReference>
<dbReference type="RefSeq" id="WP_010926977.1">
    <property type="nucleotide sequence ID" value="NC_002927.3"/>
</dbReference>
<dbReference type="SMR" id="Q44740"/>
<dbReference type="GeneID" id="56477621"/>
<dbReference type="KEGG" id="bbr:BB3893"/>
<dbReference type="eggNOG" id="COG3486">
    <property type="taxonomic scope" value="Bacteria"/>
</dbReference>
<dbReference type="HOGENOM" id="CLU_020931_0_0_4"/>
<dbReference type="BioCyc" id="MetaCyc:MONOMER-15213"/>
<dbReference type="UniPathway" id="UPA00023"/>
<dbReference type="Proteomes" id="UP000001027">
    <property type="component" value="Chromosome"/>
</dbReference>
<dbReference type="GO" id="GO:0016491">
    <property type="term" value="F:oxidoreductase activity"/>
    <property type="evidence" value="ECO:0007669"/>
    <property type="project" value="UniProtKB-KW"/>
</dbReference>
<dbReference type="GO" id="GO:0009058">
    <property type="term" value="P:biosynthetic process"/>
    <property type="evidence" value="ECO:0007669"/>
    <property type="project" value="UniProtKB-ARBA"/>
</dbReference>
<dbReference type="Gene3D" id="3.50.50.60">
    <property type="entry name" value="FAD/NAD(P)-binding domain"/>
    <property type="match status" value="1"/>
</dbReference>
<dbReference type="InterPro" id="IPR036188">
    <property type="entry name" value="FAD/NAD-bd_sf"/>
</dbReference>
<dbReference type="InterPro" id="IPR025700">
    <property type="entry name" value="Lys/Orn_oxygenase"/>
</dbReference>
<dbReference type="PANTHER" id="PTHR42802:SF1">
    <property type="entry name" value="L-ORNITHINE N(5)-MONOOXYGENASE"/>
    <property type="match status" value="1"/>
</dbReference>
<dbReference type="PANTHER" id="PTHR42802">
    <property type="entry name" value="MONOOXYGENASE"/>
    <property type="match status" value="1"/>
</dbReference>
<dbReference type="Pfam" id="PF13434">
    <property type="entry name" value="Lys_Orn_oxgnase"/>
    <property type="match status" value="1"/>
</dbReference>
<dbReference type="SUPFAM" id="SSF51905">
    <property type="entry name" value="FAD/NAD(P)-binding domain"/>
    <property type="match status" value="1"/>
</dbReference>
<keyword id="KW-0274">FAD</keyword>
<keyword id="KW-0285">Flavoprotein</keyword>
<keyword id="KW-0521">NADP</keyword>
<keyword id="KW-0560">Oxidoreductase</keyword>
<proteinExistence type="inferred from homology"/>
<organism>
    <name type="scientific">Bordetella bronchiseptica (strain ATCC BAA-588 / NCTC 13252 / RB50)</name>
    <name type="common">Alcaligenes bronchisepticus</name>
    <dbReference type="NCBI Taxonomy" id="257310"/>
    <lineage>
        <taxon>Bacteria</taxon>
        <taxon>Pseudomonadati</taxon>
        <taxon>Pseudomonadota</taxon>
        <taxon>Betaproteobacteria</taxon>
        <taxon>Burkholderiales</taxon>
        <taxon>Alcaligenaceae</taxon>
        <taxon>Bordetella</taxon>
    </lineage>
</organism>
<reference key="1">
    <citation type="journal article" date="1995" name="Gene">
        <title>Identification of alcA, a Bordetella bronchiseptica gene necessary for alcaligin production.</title>
        <authorList>
            <person name="Giardina P.C."/>
            <person name="Foster L.A."/>
            <person name="Toth S.I."/>
            <person name="Roe B.A."/>
            <person name="Dyer D.W."/>
        </authorList>
    </citation>
    <scope>NUCLEOTIDE SEQUENCE [GENOMIC DNA]</scope>
    <source>
        <strain>MBORD846</strain>
    </source>
</reference>
<reference key="2">
    <citation type="journal article" date="2003" name="Nat. Genet.">
        <title>Comparative analysis of the genome sequences of Bordetella pertussis, Bordetella parapertussis and Bordetella bronchiseptica.</title>
        <authorList>
            <person name="Parkhill J."/>
            <person name="Sebaihia M."/>
            <person name="Preston A."/>
            <person name="Murphy L.D."/>
            <person name="Thomson N.R."/>
            <person name="Harris D.E."/>
            <person name="Holden M.T.G."/>
            <person name="Churcher C.M."/>
            <person name="Bentley S.D."/>
            <person name="Mungall K.L."/>
            <person name="Cerdeno-Tarraga A.-M."/>
            <person name="Temple L."/>
            <person name="James K.D."/>
            <person name="Harris B."/>
            <person name="Quail M.A."/>
            <person name="Achtman M."/>
            <person name="Atkin R."/>
            <person name="Baker S."/>
            <person name="Basham D."/>
            <person name="Bason N."/>
            <person name="Cherevach I."/>
            <person name="Chillingworth T."/>
            <person name="Collins M."/>
            <person name="Cronin A."/>
            <person name="Davis P."/>
            <person name="Doggett J."/>
            <person name="Feltwell T."/>
            <person name="Goble A."/>
            <person name="Hamlin N."/>
            <person name="Hauser H."/>
            <person name="Holroyd S."/>
            <person name="Jagels K."/>
            <person name="Leather S."/>
            <person name="Moule S."/>
            <person name="Norberczak H."/>
            <person name="O'Neil S."/>
            <person name="Ormond D."/>
            <person name="Price C."/>
            <person name="Rabbinowitsch E."/>
            <person name="Rutter S."/>
            <person name="Sanders M."/>
            <person name="Saunders D."/>
            <person name="Seeger K."/>
            <person name="Sharp S."/>
            <person name="Simmonds M."/>
            <person name="Skelton J."/>
            <person name="Squares R."/>
            <person name="Squares S."/>
            <person name="Stevens K."/>
            <person name="Unwin L."/>
            <person name="Whitehead S."/>
            <person name="Barrell B.G."/>
            <person name="Maskell D.J."/>
        </authorList>
    </citation>
    <scope>NUCLEOTIDE SEQUENCE [LARGE SCALE GENOMIC DNA]</scope>
    <source>
        <strain>ATCC BAA-588 / NCTC 13252 / RB50</strain>
    </source>
</reference>
<protein>
    <recommendedName>
        <fullName>Alcaligin biosynthesis enzyme</fullName>
        <ecNumber>1.-.-.-</ecNumber>
    </recommendedName>
</protein>
<sequence length="461" mass="52927">MNREIYDFVAIGIGPFNLSLASLSAPLRGVRTLFLDKKSGFDWHPGMLIETSTLQNPFLADLVSLADPRSEYSYLNYCKLTNRIYSYYMRENHYLSRAEYTRYCQWVAARLPNLRFGCDVQGVLHDPESHSYLVTGQHTMSGQRFMFRCRKLVLGLGSQPYLPACCDRRAAPFIHSADYLRHKYELQGRASITIVGSGQSAAEVFHDLLRESGRHDYSLAWITRSPRFFQMENTKLTLELISPDYTEYFHDLPEARRQEILTQQNSLYKGINASLINQIYDLLDEKVHDGDNRYTLLTNSELRACRYDPLQERFQLDFQHLDCDRPFSHATDGLVLATGYSHEIPACINPIHDRIAWNADGSYRIGRNYAIDHEGSEIFVQNTGLLSHGVTNPDLGFCCYRNSQILRELTGTEHYRIETRTALQEFSPPADGVLKHRPARRAERGPTVAARPLMDIHRATL</sequence>
<name>ALCA_BORBR</name>
<comment type="cofactor">
    <cofactor evidence="1">
        <name>FAD</name>
        <dbReference type="ChEBI" id="CHEBI:57692"/>
    </cofactor>
</comment>
<comment type="pathway">
    <text>Siderophore biosynthesis; alcaligin biosynthesis.</text>
</comment>
<comment type="similarity">
    <text evidence="3">Belongs to the lysine N(6)-hydroxylase/L-ornithine N(5)-oxygenase family.</text>
</comment>
<feature type="chain" id="PRO_0000204031" description="Alcaligin biosynthesis enzyme">
    <location>
        <begin position="1"/>
        <end position="461"/>
    </location>
</feature>
<feature type="binding site" evidence="2">
    <location>
        <begin position="9"/>
        <end position="15"/>
    </location>
    <ligand>
        <name>FAD</name>
        <dbReference type="ChEBI" id="CHEBI:57692"/>
    </ligand>
</feature>
<feature type="sequence conflict" description="In Ref. 1; AAA97596/AAB40618." evidence="3" ref="1">
    <original>G</original>
    <variation>R</variation>
    <location>
        <position position="445"/>
    </location>
</feature>
<gene>
    <name type="primary">alcA</name>
    <name type="ordered locus">BB3893</name>
</gene>
<evidence type="ECO:0000250" key="1"/>
<evidence type="ECO:0000255" key="2"/>
<evidence type="ECO:0000305" key="3"/>